<proteinExistence type="inferred from homology"/>
<organism>
    <name type="scientific">Escherichia coli O157:H7</name>
    <dbReference type="NCBI Taxonomy" id="83334"/>
    <lineage>
        <taxon>Bacteria</taxon>
        <taxon>Pseudomonadati</taxon>
        <taxon>Pseudomonadota</taxon>
        <taxon>Gammaproteobacteria</taxon>
        <taxon>Enterobacterales</taxon>
        <taxon>Enterobacteriaceae</taxon>
        <taxon>Escherichia</taxon>
    </lineage>
</organism>
<accession>P58361</accession>
<comment type="function">
    <text evidence="1">Part of the anaerobic respiratory chain of trimethylamine-N-oxide reductase TorZ. Required for electron transfer to the TorZ terminal enzyme (By similarity).</text>
</comment>
<comment type="subcellular location">
    <subcellularLocation>
        <location evidence="1">Cell inner membrane</location>
        <topology evidence="1">Single-pass type II membrane protein</topology>
    </subcellularLocation>
</comment>
<comment type="PTM">
    <text evidence="1">Binds 5 heme groups per subunit.</text>
</comment>
<comment type="similarity">
    <text evidence="3">Belongs to the TorC/TorY family.</text>
</comment>
<keyword id="KW-0997">Cell inner membrane</keyword>
<keyword id="KW-1003">Cell membrane</keyword>
<keyword id="KW-0249">Electron transport</keyword>
<keyword id="KW-0349">Heme</keyword>
<keyword id="KW-0408">Iron</keyword>
<keyword id="KW-0472">Membrane</keyword>
<keyword id="KW-0479">Metal-binding</keyword>
<keyword id="KW-1185">Reference proteome</keyword>
<keyword id="KW-0812">Transmembrane</keyword>
<keyword id="KW-1133">Transmembrane helix</keyword>
<keyword id="KW-0813">Transport</keyword>
<gene>
    <name type="primary">torY</name>
    <name type="ordered locus">Z2926</name>
    <name type="ordered locus">ECs2583</name>
</gene>
<sequence length="366" mass="40257">MRGKKRIGLLFLLIAVVVGGGGFLMAQKALHKTSDTAFCLSCHSMSKPFEEYQGTVHFSNQKGIRAECADCHIPKSGMDYLFAKLKASKDIYHEFVSGKIDSDDKFEAHRQEMAETVWKELKATDSATCRSCHSFDAMDIASQSESAQKMHNKAQKGGETCIDCHKGIAHFPPEIKMDDNAAHELESQAATSVTNGAHIYPFKTSRIGELATVNPGTDLTVVDASGKQPIVLLQGYQMQGSENTLYLAAGQRLALATLSEEGIKALTVNGEWQADEYGNQWRQASLQGALTDPALADRKLLWQYAEKLDDTYCAGCHAPIAADHYTVNAWPSIAKGMGARTSMSENELDILTRYFQYNAKDITEKQ</sequence>
<reference key="1">
    <citation type="journal article" date="2001" name="Nature">
        <title>Genome sequence of enterohaemorrhagic Escherichia coli O157:H7.</title>
        <authorList>
            <person name="Perna N.T."/>
            <person name="Plunkett G. III"/>
            <person name="Burland V."/>
            <person name="Mau B."/>
            <person name="Glasner J.D."/>
            <person name="Rose D.J."/>
            <person name="Mayhew G.F."/>
            <person name="Evans P.S."/>
            <person name="Gregor J."/>
            <person name="Kirkpatrick H.A."/>
            <person name="Posfai G."/>
            <person name="Hackett J."/>
            <person name="Klink S."/>
            <person name="Boutin A."/>
            <person name="Shao Y."/>
            <person name="Miller L."/>
            <person name="Grotbeck E.J."/>
            <person name="Davis N.W."/>
            <person name="Lim A."/>
            <person name="Dimalanta E.T."/>
            <person name="Potamousis K."/>
            <person name="Apodaca J."/>
            <person name="Anantharaman T.S."/>
            <person name="Lin J."/>
            <person name="Yen G."/>
            <person name="Schwartz D.C."/>
            <person name="Welch R.A."/>
            <person name="Blattner F.R."/>
        </authorList>
    </citation>
    <scope>NUCLEOTIDE SEQUENCE [LARGE SCALE GENOMIC DNA]</scope>
    <source>
        <strain>O157:H7 / EDL933 / ATCC 700927 / EHEC</strain>
    </source>
</reference>
<reference key="2">
    <citation type="journal article" date="2001" name="DNA Res.">
        <title>Complete genome sequence of enterohemorrhagic Escherichia coli O157:H7 and genomic comparison with a laboratory strain K-12.</title>
        <authorList>
            <person name="Hayashi T."/>
            <person name="Makino K."/>
            <person name="Ohnishi M."/>
            <person name="Kurokawa K."/>
            <person name="Ishii K."/>
            <person name="Yokoyama K."/>
            <person name="Han C.-G."/>
            <person name="Ohtsubo E."/>
            <person name="Nakayama K."/>
            <person name="Murata T."/>
            <person name="Tanaka M."/>
            <person name="Tobe T."/>
            <person name="Iida T."/>
            <person name="Takami H."/>
            <person name="Honda T."/>
            <person name="Sasakawa C."/>
            <person name="Ogasawara N."/>
            <person name="Yasunaga T."/>
            <person name="Kuhara S."/>
            <person name="Shiba T."/>
            <person name="Hattori M."/>
            <person name="Shinagawa H."/>
        </authorList>
    </citation>
    <scope>NUCLEOTIDE SEQUENCE [LARGE SCALE GENOMIC DNA]</scope>
    <source>
        <strain>O157:H7 / Sakai / RIMD 0509952 / EHEC</strain>
    </source>
</reference>
<evidence type="ECO:0000250" key="1"/>
<evidence type="ECO:0000255" key="2"/>
<evidence type="ECO:0000305" key="3"/>
<name>TORY_ECO57</name>
<feature type="chain" id="PRO_0000108430" description="Cytochrome c-type protein TorY">
    <location>
        <begin position="1"/>
        <end position="366"/>
    </location>
</feature>
<feature type="topological domain" description="Cytoplasmic" evidence="2">
    <location>
        <begin position="1"/>
        <end position="6"/>
    </location>
</feature>
<feature type="transmembrane region" description="Helical" evidence="2">
    <location>
        <begin position="7"/>
        <end position="27"/>
    </location>
</feature>
<feature type="topological domain" description="Periplasmic" evidence="2">
    <location>
        <begin position="28"/>
        <end position="366"/>
    </location>
</feature>
<feature type="binding site" description="covalent" evidence="1">
    <location>
        <position position="39"/>
    </location>
    <ligand>
        <name>heme</name>
        <dbReference type="ChEBI" id="CHEBI:30413"/>
        <label>1</label>
    </ligand>
</feature>
<feature type="binding site" description="covalent" evidence="1">
    <location>
        <position position="42"/>
    </location>
    <ligand>
        <name>heme</name>
        <dbReference type="ChEBI" id="CHEBI:30413"/>
        <label>1</label>
    </ligand>
</feature>
<feature type="binding site" description="axial binding residue" evidence="1">
    <location>
        <position position="43"/>
    </location>
    <ligand>
        <name>heme</name>
        <dbReference type="ChEBI" id="CHEBI:30413"/>
        <label>1</label>
    </ligand>
    <ligandPart>
        <name>Fe</name>
        <dbReference type="ChEBI" id="CHEBI:18248"/>
    </ligandPart>
</feature>
<feature type="binding site" description="covalent" evidence="1">
    <location>
        <position position="68"/>
    </location>
    <ligand>
        <name>heme</name>
        <dbReference type="ChEBI" id="CHEBI:30413"/>
        <label>2</label>
    </ligand>
</feature>
<feature type="binding site" description="covalent" evidence="1">
    <location>
        <position position="71"/>
    </location>
    <ligand>
        <name>heme</name>
        <dbReference type="ChEBI" id="CHEBI:30413"/>
        <label>2</label>
    </ligand>
</feature>
<feature type="binding site" description="axial binding residue" evidence="1">
    <location>
        <position position="72"/>
    </location>
    <ligand>
        <name>heme</name>
        <dbReference type="ChEBI" id="CHEBI:30413"/>
        <label>2</label>
    </ligand>
    <ligandPart>
        <name>Fe</name>
        <dbReference type="ChEBI" id="CHEBI:18248"/>
    </ligandPart>
</feature>
<feature type="binding site" description="covalent" evidence="1">
    <location>
        <position position="129"/>
    </location>
    <ligand>
        <name>heme</name>
        <dbReference type="ChEBI" id="CHEBI:30413"/>
        <label>3</label>
    </ligand>
</feature>
<feature type="binding site" description="covalent" evidence="1">
    <location>
        <position position="132"/>
    </location>
    <ligand>
        <name>heme</name>
        <dbReference type="ChEBI" id="CHEBI:30413"/>
        <label>3</label>
    </ligand>
</feature>
<feature type="binding site" description="axial binding residue" evidence="1">
    <location>
        <position position="133"/>
    </location>
    <ligand>
        <name>heme</name>
        <dbReference type="ChEBI" id="CHEBI:30413"/>
        <label>3</label>
    </ligand>
    <ligandPart>
        <name>Fe</name>
        <dbReference type="ChEBI" id="CHEBI:18248"/>
    </ligandPart>
</feature>
<feature type="binding site" description="covalent" evidence="1">
    <location>
        <position position="161"/>
    </location>
    <ligand>
        <name>heme</name>
        <dbReference type="ChEBI" id="CHEBI:30413"/>
        <label>4</label>
    </ligand>
</feature>
<feature type="binding site" description="covalent" evidence="1">
    <location>
        <position position="164"/>
    </location>
    <ligand>
        <name>heme</name>
        <dbReference type="ChEBI" id="CHEBI:30413"/>
        <label>4</label>
    </ligand>
</feature>
<feature type="binding site" description="axial binding residue" evidence="1">
    <location>
        <position position="165"/>
    </location>
    <ligand>
        <name>heme</name>
        <dbReference type="ChEBI" id="CHEBI:30413"/>
        <label>4</label>
    </ligand>
    <ligandPart>
        <name>Fe</name>
        <dbReference type="ChEBI" id="CHEBI:18248"/>
    </ligandPart>
</feature>
<feature type="binding site" description="covalent" evidence="1">
    <location>
        <position position="313"/>
    </location>
    <ligand>
        <name>heme</name>
        <dbReference type="ChEBI" id="CHEBI:30413"/>
        <label>5</label>
    </ligand>
</feature>
<feature type="binding site" description="covalent" evidence="1">
    <location>
        <position position="316"/>
    </location>
    <ligand>
        <name>heme</name>
        <dbReference type="ChEBI" id="CHEBI:30413"/>
        <label>5</label>
    </ligand>
</feature>
<feature type="binding site" description="axial binding residue" evidence="1">
    <location>
        <position position="317"/>
    </location>
    <ligand>
        <name>heme</name>
        <dbReference type="ChEBI" id="CHEBI:30413"/>
        <label>5</label>
    </ligand>
    <ligandPart>
        <name>Fe</name>
        <dbReference type="ChEBI" id="CHEBI:18248"/>
    </ligandPart>
</feature>
<protein>
    <recommendedName>
        <fullName>Cytochrome c-type protein TorY</fullName>
    </recommendedName>
</protein>
<dbReference type="EMBL" id="AE005174">
    <property type="protein sequence ID" value="AAG56863.1"/>
    <property type="molecule type" value="Genomic_DNA"/>
</dbReference>
<dbReference type="EMBL" id="BA000007">
    <property type="protein sequence ID" value="BAB36006.1"/>
    <property type="molecule type" value="Genomic_DNA"/>
</dbReference>
<dbReference type="PIR" id="C85800">
    <property type="entry name" value="C85800"/>
</dbReference>
<dbReference type="PIR" id="G90951">
    <property type="entry name" value="G90951"/>
</dbReference>
<dbReference type="RefSeq" id="NP_310610.1">
    <property type="nucleotide sequence ID" value="NC_002695.1"/>
</dbReference>
<dbReference type="RefSeq" id="WP_001214277.1">
    <property type="nucleotide sequence ID" value="NZ_VOAI01000010.1"/>
</dbReference>
<dbReference type="STRING" id="155864.Z2926"/>
<dbReference type="GeneID" id="912611"/>
<dbReference type="KEGG" id="ece:Z2926"/>
<dbReference type="KEGG" id="ecs:ECs_2583"/>
<dbReference type="PATRIC" id="fig|386585.9.peg.2708"/>
<dbReference type="eggNOG" id="COG3005">
    <property type="taxonomic scope" value="Bacteria"/>
</dbReference>
<dbReference type="HOGENOM" id="CLU_058814_0_0_6"/>
<dbReference type="OMA" id="FNANQWI"/>
<dbReference type="Proteomes" id="UP000000558">
    <property type="component" value="Chromosome"/>
</dbReference>
<dbReference type="Proteomes" id="UP000002519">
    <property type="component" value="Chromosome"/>
</dbReference>
<dbReference type="GO" id="GO:0009276">
    <property type="term" value="C:Gram-negative-bacterium-type cell wall"/>
    <property type="evidence" value="ECO:0007669"/>
    <property type="project" value="InterPro"/>
</dbReference>
<dbReference type="GO" id="GO:0005886">
    <property type="term" value="C:plasma membrane"/>
    <property type="evidence" value="ECO:0007669"/>
    <property type="project" value="UniProtKB-SubCell"/>
</dbReference>
<dbReference type="GO" id="GO:0009055">
    <property type="term" value="F:electron transfer activity"/>
    <property type="evidence" value="ECO:0007669"/>
    <property type="project" value="InterPro"/>
</dbReference>
<dbReference type="GO" id="GO:0020037">
    <property type="term" value="F:heme binding"/>
    <property type="evidence" value="ECO:0007669"/>
    <property type="project" value="InterPro"/>
</dbReference>
<dbReference type="GO" id="GO:0005506">
    <property type="term" value="F:iron ion binding"/>
    <property type="evidence" value="ECO:0007669"/>
    <property type="project" value="InterPro"/>
</dbReference>
<dbReference type="GO" id="GO:0009061">
    <property type="term" value="P:anaerobic respiration"/>
    <property type="evidence" value="ECO:0007669"/>
    <property type="project" value="TreeGrafter"/>
</dbReference>
<dbReference type="FunFam" id="1.10.3820.10:FF:000001">
    <property type="entry name" value="Cytochrome c-type protein"/>
    <property type="match status" value="1"/>
</dbReference>
<dbReference type="Gene3D" id="1.10.3820.10">
    <property type="entry name" value="Di-heme elbow motif domain"/>
    <property type="match status" value="1"/>
</dbReference>
<dbReference type="InterPro" id="IPR051174">
    <property type="entry name" value="Cytochrome_c-type_ET"/>
</dbReference>
<dbReference type="InterPro" id="IPR009154">
    <property type="entry name" value="Membr-bd_4haem_cyt_TorC"/>
</dbReference>
<dbReference type="InterPro" id="IPR036280">
    <property type="entry name" value="Multihaem_cyt_sf"/>
</dbReference>
<dbReference type="InterPro" id="IPR005126">
    <property type="entry name" value="NapC/NirT_cyt_c_N"/>
</dbReference>
<dbReference type="InterPro" id="IPR038266">
    <property type="entry name" value="NapC/NirT_cytc_sf"/>
</dbReference>
<dbReference type="PANTHER" id="PTHR30333">
    <property type="entry name" value="CYTOCHROME C-TYPE PROTEIN"/>
    <property type="match status" value="1"/>
</dbReference>
<dbReference type="PANTHER" id="PTHR30333:SF3">
    <property type="entry name" value="CYTOCHROME C-TYPE PROTEIN TORY"/>
    <property type="match status" value="1"/>
</dbReference>
<dbReference type="Pfam" id="PF03264">
    <property type="entry name" value="Cytochrom_NNT"/>
    <property type="match status" value="1"/>
</dbReference>
<dbReference type="PIRSF" id="PIRSF000014">
    <property type="entry name" value="4_hem_cytch_TorC"/>
    <property type="match status" value="1"/>
</dbReference>
<dbReference type="SUPFAM" id="SSF48695">
    <property type="entry name" value="Multiheme cytochromes"/>
    <property type="match status" value="1"/>
</dbReference>
<dbReference type="PROSITE" id="PS51008">
    <property type="entry name" value="MULTIHEME_CYTC"/>
    <property type="match status" value="2"/>
</dbReference>